<evidence type="ECO:0000250" key="1">
    <source>
        <dbReference type="UniProtKB" id="Q8BGU2"/>
    </source>
</evidence>
<evidence type="ECO:0000250" key="2">
    <source>
        <dbReference type="UniProtKB" id="Q9R171"/>
    </source>
</evidence>
<evidence type="ECO:0000255" key="3"/>
<evidence type="ECO:0000255" key="4">
    <source>
        <dbReference type="PROSITE-ProRule" id="PRU00368"/>
    </source>
</evidence>
<evidence type="ECO:0000255" key="5">
    <source>
        <dbReference type="PROSITE-ProRule" id="PRU00498"/>
    </source>
</evidence>
<evidence type="ECO:0000312" key="6">
    <source>
        <dbReference type="HGNC" id="HGNC:1544"/>
    </source>
</evidence>
<keyword id="KW-1015">Disulfide bond</keyword>
<keyword id="KW-0325">Glycoprotein</keyword>
<keyword id="KW-1267">Proteomics identification</keyword>
<keyword id="KW-1185">Reference proteome</keyword>
<keyword id="KW-0964">Secreted</keyword>
<keyword id="KW-0732">Signal</keyword>
<sequence>MQAPGRGPLGLRLMMPGRRGALREPGGCGSCLGVALALLLLLLPACCPVRAQNDTEPIVLEGKCLVVCDSSPSADGAVTSSLGISVRSGSAKVAFSATRSTNHEPSEMSNRTMTIYFDQVLVNIGNHFDLASSIFVAPRKGIYSFSFHVVKVYNRQTIQVSLMQNGYPVISAFAGDQDVTREAASNGVLLLMEREDKVHLKLERGNLMGGWKYSTFSGFLVFPL</sequence>
<dbReference type="EMBL" id="AK291364">
    <property type="protein sequence ID" value="BAF84053.1"/>
    <property type="molecule type" value="mRNA"/>
</dbReference>
<dbReference type="EMBL" id="AY359074">
    <property type="protein sequence ID" value="AAQ89433.1"/>
    <property type="molecule type" value="mRNA"/>
</dbReference>
<dbReference type="EMBL" id="CH471117">
    <property type="protein sequence ID" value="EAW66527.1"/>
    <property type="molecule type" value="Genomic_DNA"/>
</dbReference>
<dbReference type="EMBL" id="BC035789">
    <property type="protein sequence ID" value="AAH35789.1"/>
    <property type="molecule type" value="mRNA"/>
</dbReference>
<dbReference type="CCDS" id="CCDS11999.1"/>
<dbReference type="RefSeq" id="NP_872317.1">
    <property type="nucleotide sequence ID" value="NM_182511.4"/>
</dbReference>
<dbReference type="RefSeq" id="XP_006722457.1">
    <property type="nucleotide sequence ID" value="XM_006722394.4"/>
</dbReference>
<dbReference type="RefSeq" id="XP_011524126.1">
    <property type="nucleotide sequence ID" value="XM_011525824.3"/>
</dbReference>
<dbReference type="RefSeq" id="XP_016881048.1">
    <property type="nucleotide sequence ID" value="XM_017025559.2"/>
</dbReference>
<dbReference type="RefSeq" id="XP_016881049.1">
    <property type="nucleotide sequence ID" value="XM_017025560.2"/>
</dbReference>
<dbReference type="RefSeq" id="XP_047293259.1">
    <property type="nucleotide sequence ID" value="XM_047437303.1"/>
</dbReference>
<dbReference type="RefSeq" id="XP_054174185.1">
    <property type="nucleotide sequence ID" value="XM_054318210.1"/>
</dbReference>
<dbReference type="RefSeq" id="XP_054174186.1">
    <property type="nucleotide sequence ID" value="XM_054318211.1"/>
</dbReference>
<dbReference type="RefSeq" id="XP_054174187.1">
    <property type="nucleotide sequence ID" value="XM_054318212.1"/>
</dbReference>
<dbReference type="RefSeq" id="XP_054174188.1">
    <property type="nucleotide sequence ID" value="XM_054318213.1"/>
</dbReference>
<dbReference type="SMR" id="Q8IUK8"/>
<dbReference type="FunCoup" id="Q8IUK8">
    <property type="interactions" value="33"/>
</dbReference>
<dbReference type="STRING" id="9606.ENSP00000269503"/>
<dbReference type="GlyCosmos" id="Q8IUK8">
    <property type="glycosylation" value="2 sites, No reported glycans"/>
</dbReference>
<dbReference type="GlyGen" id="Q8IUK8">
    <property type="glycosylation" value="2 sites"/>
</dbReference>
<dbReference type="iPTMnet" id="Q8IUK8"/>
<dbReference type="PhosphoSitePlus" id="Q8IUK8"/>
<dbReference type="BioMuta" id="CBLN2"/>
<dbReference type="DMDM" id="46395886"/>
<dbReference type="MassIVE" id="Q8IUK8"/>
<dbReference type="PaxDb" id="9606-ENSP00000269503"/>
<dbReference type="PeptideAtlas" id="Q8IUK8"/>
<dbReference type="ProteomicsDB" id="70583"/>
<dbReference type="Antibodypedia" id="42209">
    <property type="antibodies" value="163 antibodies from 26 providers"/>
</dbReference>
<dbReference type="DNASU" id="147381"/>
<dbReference type="Ensembl" id="ENST00000269503.9">
    <property type="protein sequence ID" value="ENSP00000269503.4"/>
    <property type="gene ID" value="ENSG00000141668.10"/>
</dbReference>
<dbReference type="Ensembl" id="ENST00000585159.5">
    <property type="protein sequence ID" value="ENSP00000463771.1"/>
    <property type="gene ID" value="ENSG00000141668.10"/>
</dbReference>
<dbReference type="GeneID" id="147381"/>
<dbReference type="KEGG" id="hsa:147381"/>
<dbReference type="MANE-Select" id="ENST00000269503.9">
    <property type="protein sequence ID" value="ENSP00000269503.4"/>
    <property type="RefSeq nucleotide sequence ID" value="NM_182511.4"/>
    <property type="RefSeq protein sequence ID" value="NP_872317.1"/>
</dbReference>
<dbReference type="UCSC" id="uc002lku.4">
    <property type="organism name" value="human"/>
</dbReference>
<dbReference type="AGR" id="HGNC:1544"/>
<dbReference type="CTD" id="147381"/>
<dbReference type="DisGeNET" id="147381"/>
<dbReference type="GeneCards" id="CBLN2"/>
<dbReference type="HGNC" id="HGNC:1544">
    <property type="gene designation" value="CBLN2"/>
</dbReference>
<dbReference type="HPA" id="ENSG00000141668">
    <property type="expression patterns" value="Tissue enriched (brain)"/>
</dbReference>
<dbReference type="MIM" id="600433">
    <property type="type" value="gene"/>
</dbReference>
<dbReference type="neXtProt" id="NX_Q8IUK8"/>
<dbReference type="OpenTargets" id="ENSG00000141668"/>
<dbReference type="PharmGKB" id="PA26119"/>
<dbReference type="VEuPathDB" id="HostDB:ENSG00000141668"/>
<dbReference type="eggNOG" id="ENOG502QT93">
    <property type="taxonomic scope" value="Eukaryota"/>
</dbReference>
<dbReference type="GeneTree" id="ENSGT00940000159988"/>
<dbReference type="InParanoid" id="Q8IUK8"/>
<dbReference type="OMA" id="CSGQNDT"/>
<dbReference type="OrthoDB" id="10070467at2759"/>
<dbReference type="PAN-GO" id="Q8IUK8">
    <property type="GO annotations" value="3 GO annotations based on evolutionary models"/>
</dbReference>
<dbReference type="PhylomeDB" id="Q8IUK8"/>
<dbReference type="TreeFam" id="TF329591"/>
<dbReference type="PathwayCommons" id="Q8IUK8"/>
<dbReference type="BioGRID-ORCS" id="147381">
    <property type="hits" value="13 hits in 1148 CRISPR screens"/>
</dbReference>
<dbReference type="ChiTaRS" id="CBLN2">
    <property type="organism name" value="human"/>
</dbReference>
<dbReference type="GenomeRNAi" id="147381"/>
<dbReference type="Pharos" id="Q8IUK8">
    <property type="development level" value="Tbio"/>
</dbReference>
<dbReference type="PRO" id="PR:Q8IUK8"/>
<dbReference type="Proteomes" id="UP000005640">
    <property type="component" value="Chromosome 18"/>
</dbReference>
<dbReference type="RNAct" id="Q8IUK8">
    <property type="molecule type" value="protein"/>
</dbReference>
<dbReference type="Bgee" id="ENSG00000141668">
    <property type="expression patterns" value="Expressed in superior frontal gyrus and 119 other cell types or tissues"/>
</dbReference>
<dbReference type="ExpressionAtlas" id="Q8IUK8">
    <property type="expression patterns" value="baseline and differential"/>
</dbReference>
<dbReference type="GO" id="GO:0005615">
    <property type="term" value="C:extracellular space"/>
    <property type="evidence" value="ECO:0007669"/>
    <property type="project" value="Ensembl"/>
</dbReference>
<dbReference type="GO" id="GO:0098978">
    <property type="term" value="C:glutamatergic synapse"/>
    <property type="evidence" value="ECO:0007669"/>
    <property type="project" value="Ensembl"/>
</dbReference>
<dbReference type="GO" id="GO:0045202">
    <property type="term" value="C:synapse"/>
    <property type="evidence" value="ECO:0000318"/>
    <property type="project" value="GO_Central"/>
</dbReference>
<dbReference type="GO" id="GO:0043083">
    <property type="term" value="C:synaptic cleft"/>
    <property type="evidence" value="ECO:0000250"/>
    <property type="project" value="UniProt"/>
</dbReference>
<dbReference type="GO" id="GO:0098820">
    <property type="term" value="C:trans-synaptic protein complex"/>
    <property type="evidence" value="ECO:0000250"/>
    <property type="project" value="UniProt"/>
</dbReference>
<dbReference type="GO" id="GO:0099558">
    <property type="term" value="P:maintenance of synapse structure"/>
    <property type="evidence" value="ECO:0000250"/>
    <property type="project" value="UniProtKB"/>
</dbReference>
<dbReference type="GO" id="GO:0051965">
    <property type="term" value="P:positive regulation of synapse assembly"/>
    <property type="evidence" value="ECO:0007669"/>
    <property type="project" value="Ensembl"/>
</dbReference>
<dbReference type="GO" id="GO:0098814">
    <property type="term" value="P:spontaneous synaptic transmission"/>
    <property type="evidence" value="ECO:0000250"/>
    <property type="project" value="UniProtKB"/>
</dbReference>
<dbReference type="GO" id="GO:0007416">
    <property type="term" value="P:synapse assembly"/>
    <property type="evidence" value="ECO:0007669"/>
    <property type="project" value="Ensembl"/>
</dbReference>
<dbReference type="GO" id="GO:0050808">
    <property type="term" value="P:synapse organization"/>
    <property type="evidence" value="ECO:0000250"/>
    <property type="project" value="UniProtKB"/>
</dbReference>
<dbReference type="GO" id="GO:0099550">
    <property type="term" value="P:trans-synaptic signaling, modulating synaptic transmission"/>
    <property type="evidence" value="ECO:0007669"/>
    <property type="project" value="Ensembl"/>
</dbReference>
<dbReference type="FunFam" id="2.60.120.40:FF:000002">
    <property type="entry name" value="Cerebellin 4"/>
    <property type="match status" value="1"/>
</dbReference>
<dbReference type="Gene3D" id="2.60.120.40">
    <property type="match status" value="1"/>
</dbReference>
<dbReference type="InterPro" id="IPR001073">
    <property type="entry name" value="C1q_dom"/>
</dbReference>
<dbReference type="InterPro" id="IPR050822">
    <property type="entry name" value="Cerebellin_Synaptic_Org"/>
</dbReference>
<dbReference type="InterPro" id="IPR008983">
    <property type="entry name" value="Tumour_necrosis_fac-like_dom"/>
</dbReference>
<dbReference type="PANTHER" id="PTHR22923:SF50">
    <property type="entry name" value="CEREBELLIN-2"/>
    <property type="match status" value="1"/>
</dbReference>
<dbReference type="PANTHER" id="PTHR22923">
    <property type="entry name" value="CEREBELLIN-RELATED"/>
    <property type="match status" value="1"/>
</dbReference>
<dbReference type="Pfam" id="PF00386">
    <property type="entry name" value="C1q"/>
    <property type="match status" value="1"/>
</dbReference>
<dbReference type="PRINTS" id="PR00007">
    <property type="entry name" value="COMPLEMNTC1Q"/>
</dbReference>
<dbReference type="SMART" id="SM00110">
    <property type="entry name" value="C1Q"/>
    <property type="match status" value="1"/>
</dbReference>
<dbReference type="SUPFAM" id="SSF49842">
    <property type="entry name" value="TNF-like"/>
    <property type="match status" value="1"/>
</dbReference>
<dbReference type="PROSITE" id="PS50871">
    <property type="entry name" value="C1Q"/>
    <property type="match status" value="1"/>
</dbReference>
<organism>
    <name type="scientific">Homo sapiens</name>
    <name type="common">Human</name>
    <dbReference type="NCBI Taxonomy" id="9606"/>
    <lineage>
        <taxon>Eukaryota</taxon>
        <taxon>Metazoa</taxon>
        <taxon>Chordata</taxon>
        <taxon>Craniata</taxon>
        <taxon>Vertebrata</taxon>
        <taxon>Euteleostomi</taxon>
        <taxon>Mammalia</taxon>
        <taxon>Eutheria</taxon>
        <taxon>Euarchontoglires</taxon>
        <taxon>Primates</taxon>
        <taxon>Haplorrhini</taxon>
        <taxon>Catarrhini</taxon>
        <taxon>Hominidae</taxon>
        <taxon>Homo</taxon>
    </lineage>
</organism>
<proteinExistence type="evidence at protein level"/>
<accession>Q8IUK8</accession>
<accession>Q53Z56</accession>
<comment type="function">
    <text evidence="1">Acts as a synaptic organizer in specific subsets of neurons in the brain. Essential for long-term maintenance but not establishment of excitatory synapses. Functions as part of a trans-synaptic complex by binding to postsynaptic GRID1 and presynaptic neurexins. This interaction helps regulate the activity of NMDA and AMPA receptors at hippocampal synapses without affecting synapse formation. NRXN1B-CBLN2-GRID1 complex transduce presynaptic signals into postsynaptic NMDAR response. NRXN3B-CBLN2-GRID1 complex transduce presynaptic signals into postsynaptic AMPAR response.</text>
</comment>
<comment type="subunit">
    <text evidence="1 2">Homohexamer; disulfide-linked homotrimers. The trimers are assembled via the globular C1q domains. The trimers associate via N-terminal cysteine residues to form disulfide-linked hexamers (By similarity). May form homooligomers or heterooligomers with CBLN1 and CBLN3 prior to secretion. Once secreted, does not interact with other CBLN family members (By similarity). Interacts with GRID2, and more weakly with GRID1. Interacts with NRXN1 and NRXN2 long and short isoforms produced by alternative promoter usage. Weakly interacts with NRXN3 short isoform and not at all with NRXN3 long isoform (By similarity).</text>
</comment>
<comment type="subcellular location">
    <subcellularLocation>
        <location evidence="1">Secreted</location>
    </subcellularLocation>
</comment>
<name>CBLN2_HUMAN</name>
<protein>
    <recommendedName>
        <fullName>Cerebellin-2</fullName>
    </recommendedName>
</protein>
<gene>
    <name evidence="6" type="primary">CBLN2</name>
    <name type="ORF">UNQ1892/PRO4338</name>
</gene>
<reference key="1">
    <citation type="journal article" date="2004" name="Nat. Genet.">
        <title>Complete sequencing and characterization of 21,243 full-length human cDNAs.</title>
        <authorList>
            <person name="Ota T."/>
            <person name="Suzuki Y."/>
            <person name="Nishikawa T."/>
            <person name="Otsuki T."/>
            <person name="Sugiyama T."/>
            <person name="Irie R."/>
            <person name="Wakamatsu A."/>
            <person name="Hayashi K."/>
            <person name="Sato H."/>
            <person name="Nagai K."/>
            <person name="Kimura K."/>
            <person name="Makita H."/>
            <person name="Sekine M."/>
            <person name="Obayashi M."/>
            <person name="Nishi T."/>
            <person name="Shibahara T."/>
            <person name="Tanaka T."/>
            <person name="Ishii S."/>
            <person name="Yamamoto J."/>
            <person name="Saito K."/>
            <person name="Kawai Y."/>
            <person name="Isono Y."/>
            <person name="Nakamura Y."/>
            <person name="Nagahari K."/>
            <person name="Murakami K."/>
            <person name="Yasuda T."/>
            <person name="Iwayanagi T."/>
            <person name="Wagatsuma M."/>
            <person name="Shiratori A."/>
            <person name="Sudo H."/>
            <person name="Hosoiri T."/>
            <person name="Kaku Y."/>
            <person name="Kodaira H."/>
            <person name="Kondo H."/>
            <person name="Sugawara M."/>
            <person name="Takahashi M."/>
            <person name="Kanda K."/>
            <person name="Yokoi T."/>
            <person name="Furuya T."/>
            <person name="Kikkawa E."/>
            <person name="Omura Y."/>
            <person name="Abe K."/>
            <person name="Kamihara K."/>
            <person name="Katsuta N."/>
            <person name="Sato K."/>
            <person name="Tanikawa M."/>
            <person name="Yamazaki M."/>
            <person name="Ninomiya K."/>
            <person name="Ishibashi T."/>
            <person name="Yamashita H."/>
            <person name="Murakawa K."/>
            <person name="Fujimori K."/>
            <person name="Tanai H."/>
            <person name="Kimata M."/>
            <person name="Watanabe M."/>
            <person name="Hiraoka S."/>
            <person name="Chiba Y."/>
            <person name="Ishida S."/>
            <person name="Ono Y."/>
            <person name="Takiguchi S."/>
            <person name="Watanabe S."/>
            <person name="Yosida M."/>
            <person name="Hotuta T."/>
            <person name="Kusano J."/>
            <person name="Kanehori K."/>
            <person name="Takahashi-Fujii A."/>
            <person name="Hara H."/>
            <person name="Tanase T.-O."/>
            <person name="Nomura Y."/>
            <person name="Togiya S."/>
            <person name="Komai F."/>
            <person name="Hara R."/>
            <person name="Takeuchi K."/>
            <person name="Arita M."/>
            <person name="Imose N."/>
            <person name="Musashino K."/>
            <person name="Yuuki H."/>
            <person name="Oshima A."/>
            <person name="Sasaki N."/>
            <person name="Aotsuka S."/>
            <person name="Yoshikawa Y."/>
            <person name="Matsunawa H."/>
            <person name="Ichihara T."/>
            <person name="Shiohata N."/>
            <person name="Sano S."/>
            <person name="Moriya S."/>
            <person name="Momiyama H."/>
            <person name="Satoh N."/>
            <person name="Takami S."/>
            <person name="Terashima Y."/>
            <person name="Suzuki O."/>
            <person name="Nakagawa S."/>
            <person name="Senoh A."/>
            <person name="Mizoguchi H."/>
            <person name="Goto Y."/>
            <person name="Shimizu F."/>
            <person name="Wakebe H."/>
            <person name="Hishigaki H."/>
            <person name="Watanabe T."/>
            <person name="Sugiyama A."/>
            <person name="Takemoto M."/>
            <person name="Kawakami B."/>
            <person name="Yamazaki M."/>
            <person name="Watanabe K."/>
            <person name="Kumagai A."/>
            <person name="Itakura S."/>
            <person name="Fukuzumi Y."/>
            <person name="Fujimori Y."/>
            <person name="Komiyama M."/>
            <person name="Tashiro H."/>
            <person name="Tanigami A."/>
            <person name="Fujiwara T."/>
            <person name="Ono T."/>
            <person name="Yamada K."/>
            <person name="Fujii Y."/>
            <person name="Ozaki K."/>
            <person name="Hirao M."/>
            <person name="Ohmori Y."/>
            <person name="Kawabata A."/>
            <person name="Hikiji T."/>
            <person name="Kobatake N."/>
            <person name="Inagaki H."/>
            <person name="Ikema Y."/>
            <person name="Okamoto S."/>
            <person name="Okitani R."/>
            <person name="Kawakami T."/>
            <person name="Noguchi S."/>
            <person name="Itoh T."/>
            <person name="Shigeta K."/>
            <person name="Senba T."/>
            <person name="Matsumura K."/>
            <person name="Nakajima Y."/>
            <person name="Mizuno T."/>
            <person name="Morinaga M."/>
            <person name="Sasaki M."/>
            <person name="Togashi T."/>
            <person name="Oyama M."/>
            <person name="Hata H."/>
            <person name="Watanabe M."/>
            <person name="Komatsu T."/>
            <person name="Mizushima-Sugano J."/>
            <person name="Satoh T."/>
            <person name="Shirai Y."/>
            <person name="Takahashi Y."/>
            <person name="Nakagawa K."/>
            <person name="Okumura K."/>
            <person name="Nagase T."/>
            <person name="Nomura N."/>
            <person name="Kikuchi H."/>
            <person name="Masuho Y."/>
            <person name="Yamashita R."/>
            <person name="Nakai K."/>
            <person name="Yada T."/>
            <person name="Nakamura Y."/>
            <person name="Ohara O."/>
            <person name="Isogai T."/>
            <person name="Sugano S."/>
        </authorList>
    </citation>
    <scope>NUCLEOTIDE SEQUENCE [LARGE SCALE MRNA]</scope>
    <source>
        <tissue>Brain</tissue>
    </source>
</reference>
<reference key="2">
    <citation type="journal article" date="2003" name="Genome Res.">
        <title>The secreted protein discovery initiative (SPDI), a large-scale effort to identify novel human secreted and transmembrane proteins: a bioinformatics assessment.</title>
        <authorList>
            <person name="Clark H.F."/>
            <person name="Gurney A.L."/>
            <person name="Abaya E."/>
            <person name="Baker K."/>
            <person name="Baldwin D.T."/>
            <person name="Brush J."/>
            <person name="Chen J."/>
            <person name="Chow B."/>
            <person name="Chui C."/>
            <person name="Crowley C."/>
            <person name="Currell B."/>
            <person name="Deuel B."/>
            <person name="Dowd P."/>
            <person name="Eaton D."/>
            <person name="Foster J.S."/>
            <person name="Grimaldi C."/>
            <person name="Gu Q."/>
            <person name="Hass P.E."/>
            <person name="Heldens S."/>
            <person name="Huang A."/>
            <person name="Kim H.S."/>
            <person name="Klimowski L."/>
            <person name="Jin Y."/>
            <person name="Johnson S."/>
            <person name="Lee J."/>
            <person name="Lewis L."/>
            <person name="Liao D."/>
            <person name="Mark M.R."/>
            <person name="Robbie E."/>
            <person name="Sanchez C."/>
            <person name="Schoenfeld J."/>
            <person name="Seshagiri S."/>
            <person name="Simmons L."/>
            <person name="Singh J."/>
            <person name="Smith V."/>
            <person name="Stinson J."/>
            <person name="Vagts A."/>
            <person name="Vandlen R.L."/>
            <person name="Watanabe C."/>
            <person name="Wieand D."/>
            <person name="Woods K."/>
            <person name="Xie M.-H."/>
            <person name="Yansura D.G."/>
            <person name="Yi S."/>
            <person name="Yu G."/>
            <person name="Yuan J."/>
            <person name="Zhang M."/>
            <person name="Zhang Z."/>
            <person name="Goddard A.D."/>
            <person name="Wood W.I."/>
            <person name="Godowski P.J."/>
            <person name="Gray A.M."/>
        </authorList>
    </citation>
    <scope>NUCLEOTIDE SEQUENCE [LARGE SCALE MRNA]</scope>
</reference>
<reference key="3">
    <citation type="submission" date="2005-07" db="EMBL/GenBank/DDBJ databases">
        <authorList>
            <person name="Mural R.J."/>
            <person name="Istrail S."/>
            <person name="Sutton G.G."/>
            <person name="Florea L."/>
            <person name="Halpern A.L."/>
            <person name="Mobarry C.M."/>
            <person name="Lippert R."/>
            <person name="Walenz B."/>
            <person name="Shatkay H."/>
            <person name="Dew I."/>
            <person name="Miller J.R."/>
            <person name="Flanigan M.J."/>
            <person name="Edwards N.J."/>
            <person name="Bolanos R."/>
            <person name="Fasulo D."/>
            <person name="Halldorsson B.V."/>
            <person name="Hannenhalli S."/>
            <person name="Turner R."/>
            <person name="Yooseph S."/>
            <person name="Lu F."/>
            <person name="Nusskern D.R."/>
            <person name="Shue B.C."/>
            <person name="Zheng X.H."/>
            <person name="Zhong F."/>
            <person name="Delcher A.L."/>
            <person name="Huson D.H."/>
            <person name="Kravitz S.A."/>
            <person name="Mouchard L."/>
            <person name="Reinert K."/>
            <person name="Remington K.A."/>
            <person name="Clark A.G."/>
            <person name="Waterman M.S."/>
            <person name="Eichler E.E."/>
            <person name="Adams M.D."/>
            <person name="Hunkapiller M.W."/>
            <person name="Myers E.W."/>
            <person name="Venter J.C."/>
        </authorList>
    </citation>
    <scope>NUCLEOTIDE SEQUENCE [LARGE SCALE GENOMIC DNA]</scope>
</reference>
<reference key="4">
    <citation type="journal article" date="2004" name="Genome Res.">
        <title>The status, quality, and expansion of the NIH full-length cDNA project: the Mammalian Gene Collection (MGC).</title>
        <authorList>
            <consortium name="The MGC Project Team"/>
        </authorList>
    </citation>
    <scope>NUCLEOTIDE SEQUENCE [LARGE SCALE MRNA]</scope>
    <source>
        <tissue>Brain</tissue>
    </source>
</reference>
<feature type="signal peptide" evidence="3">
    <location>
        <begin position="1"/>
        <end position="51"/>
    </location>
</feature>
<feature type="chain" id="PRO_0000003551" description="Cerebellin-2">
    <location>
        <begin position="52"/>
        <end position="224"/>
    </location>
</feature>
<feature type="domain" description="C1q" evidence="4">
    <location>
        <begin position="88"/>
        <end position="224"/>
    </location>
</feature>
<feature type="glycosylation site" description="N-linked (GlcNAc...) asparagine" evidence="5">
    <location>
        <position position="53"/>
    </location>
</feature>
<feature type="glycosylation site" description="N-linked (GlcNAc...) asparagine" evidence="5">
    <location>
        <position position="110"/>
    </location>
</feature>
<feature type="disulfide bond" description="Interchain" evidence="2">
    <location>
        <position position="64"/>
    </location>
</feature>
<feature type="disulfide bond" description="Interchain" evidence="2">
    <location>
        <position position="68"/>
    </location>
</feature>